<comment type="function">
    <text evidence="1">The UvrABC repair system catalyzes the recognition and processing of DNA lesions. UvrC both incises the 5' and 3' sides of the lesion. The N-terminal half is responsible for the 3' incision and the C-terminal half is responsible for the 5' incision.</text>
</comment>
<comment type="subunit">
    <text evidence="1">Interacts with UvrB in an incision complex.</text>
</comment>
<comment type="subcellular location">
    <subcellularLocation>
        <location evidence="1">Cytoplasm</location>
    </subcellularLocation>
</comment>
<comment type="similarity">
    <text evidence="1">Belongs to the UvrC family.</text>
</comment>
<proteinExistence type="inferred from homology"/>
<evidence type="ECO:0000255" key="1">
    <source>
        <dbReference type="HAMAP-Rule" id="MF_00203"/>
    </source>
</evidence>
<feature type="chain" id="PRO_0000264901" description="UvrABC system protein C">
    <location>
        <begin position="1"/>
        <end position="594"/>
    </location>
</feature>
<feature type="domain" description="GIY-YIG" evidence="1">
    <location>
        <begin position="13"/>
        <end position="99"/>
    </location>
</feature>
<feature type="domain" description="UVR" evidence="1">
    <location>
        <begin position="205"/>
        <end position="240"/>
    </location>
</feature>
<keyword id="KW-0963">Cytoplasm</keyword>
<keyword id="KW-0227">DNA damage</keyword>
<keyword id="KW-0228">DNA excision</keyword>
<keyword id="KW-0234">DNA repair</keyword>
<keyword id="KW-0267">Excision nuclease</keyword>
<keyword id="KW-0742">SOS response</keyword>
<accession>Q1CT48</accession>
<sequence>MADLLSSLKNLSHSSGVYQYFDKNRQLLYIGKAKNLKKRIKSYFSIHNNEITPNHRASLRIQMMVKQIAFLETILVENEQDALILENSLIKQLKPKYNILLRDDKTYPYIYMDFSTDFPIPLITRKILKQPGVKYFGPFTSGAKDILDSLYELLPLVQKKNCIKDKKACMFYQIERCKAPCENKITKEEYSKIAKECLEMIENRDKLIKELELKMERLSNNLRFEEALIYRDRIAKIQKIAPFTCMDLAKLYDLDIFAFYGASNKAVLVKMFMRGGKIISSAFEKIHSLNGFDTDEAMKQAIINHYQSHLPLMPEQILLSACSNEALKELQEFISHQYSKKIALSIPKKGDKLALIEIAMKNAQEIFSQEKTSDEDLILEEVRSLFNLECVPYRVEIFDTSHHSNSQCVGGMVVYENNAFQKNSYRRYHLKGSNEYDQMSELLTRRALDFAKEPPPNLWVIDGGRAQLNIALEILKSSGSFVEVIAISKEKRDSKAYRSKGGAKDIIHTPSDTFKLLPSDKRLQWVQKLRDESHRYAINFHRSTKLKNMKQIALLKEKGIGEASVKKLLDYFGSFEAIEKASEQEKNAVLKKRI</sequence>
<reference key="1">
    <citation type="journal article" date="2006" name="Proc. Natl. Acad. Sci. U.S.A.">
        <title>The complete genome sequence of a chronic atrophic gastritis Helicobacter pylori strain: evolution during disease progression.</title>
        <authorList>
            <person name="Oh J.D."/>
            <person name="Kling-Baeckhed H."/>
            <person name="Giannakis M."/>
            <person name="Xu J."/>
            <person name="Fulton R.S."/>
            <person name="Fulton L.A."/>
            <person name="Cordum H.S."/>
            <person name="Wang C."/>
            <person name="Elliott G."/>
            <person name="Edwards J."/>
            <person name="Mardis E.R."/>
            <person name="Engstrand L.G."/>
            <person name="Gordon J.I."/>
        </authorList>
    </citation>
    <scope>NUCLEOTIDE SEQUENCE [LARGE SCALE GENOMIC DNA]</scope>
    <source>
        <strain>HPAG1</strain>
    </source>
</reference>
<dbReference type="EMBL" id="CP000241">
    <property type="protein sequence ID" value="ABF84874.1"/>
    <property type="molecule type" value="Genomic_DNA"/>
</dbReference>
<dbReference type="RefSeq" id="WP_000774351.1">
    <property type="nucleotide sequence ID" value="NC_008086.1"/>
</dbReference>
<dbReference type="SMR" id="Q1CT48"/>
<dbReference type="KEGG" id="hpa:HPAG1_0807"/>
<dbReference type="HOGENOM" id="CLU_014841_3_2_7"/>
<dbReference type="GO" id="GO:0005737">
    <property type="term" value="C:cytoplasm"/>
    <property type="evidence" value="ECO:0007669"/>
    <property type="project" value="UniProtKB-SubCell"/>
</dbReference>
<dbReference type="GO" id="GO:0009380">
    <property type="term" value="C:excinuclease repair complex"/>
    <property type="evidence" value="ECO:0007669"/>
    <property type="project" value="InterPro"/>
</dbReference>
<dbReference type="GO" id="GO:0003677">
    <property type="term" value="F:DNA binding"/>
    <property type="evidence" value="ECO:0007669"/>
    <property type="project" value="UniProtKB-UniRule"/>
</dbReference>
<dbReference type="GO" id="GO:0009381">
    <property type="term" value="F:excinuclease ABC activity"/>
    <property type="evidence" value="ECO:0007669"/>
    <property type="project" value="UniProtKB-UniRule"/>
</dbReference>
<dbReference type="GO" id="GO:0006289">
    <property type="term" value="P:nucleotide-excision repair"/>
    <property type="evidence" value="ECO:0007669"/>
    <property type="project" value="UniProtKB-UniRule"/>
</dbReference>
<dbReference type="GO" id="GO:0009432">
    <property type="term" value="P:SOS response"/>
    <property type="evidence" value="ECO:0007669"/>
    <property type="project" value="UniProtKB-UniRule"/>
</dbReference>
<dbReference type="CDD" id="cd10434">
    <property type="entry name" value="GIY-YIG_UvrC_Cho"/>
    <property type="match status" value="1"/>
</dbReference>
<dbReference type="FunFam" id="3.40.1440.10:FF:000001">
    <property type="entry name" value="UvrABC system protein C"/>
    <property type="match status" value="1"/>
</dbReference>
<dbReference type="Gene3D" id="1.10.150.20">
    <property type="entry name" value="5' to 3' exonuclease, C-terminal subdomain"/>
    <property type="match status" value="1"/>
</dbReference>
<dbReference type="Gene3D" id="3.40.1440.10">
    <property type="entry name" value="GIY-YIG endonuclease"/>
    <property type="match status" value="1"/>
</dbReference>
<dbReference type="Gene3D" id="4.10.860.10">
    <property type="entry name" value="UVR domain"/>
    <property type="match status" value="1"/>
</dbReference>
<dbReference type="Gene3D" id="3.30.420.340">
    <property type="entry name" value="UvrC, RNAse H endonuclease domain"/>
    <property type="match status" value="1"/>
</dbReference>
<dbReference type="HAMAP" id="MF_00203">
    <property type="entry name" value="UvrC"/>
    <property type="match status" value="1"/>
</dbReference>
<dbReference type="InterPro" id="IPR000305">
    <property type="entry name" value="GIY-YIG_endonuc"/>
</dbReference>
<dbReference type="InterPro" id="IPR035901">
    <property type="entry name" value="GIY-YIG_endonuc_sf"/>
</dbReference>
<dbReference type="InterPro" id="IPR047296">
    <property type="entry name" value="GIY-YIG_UvrC_Cho"/>
</dbReference>
<dbReference type="InterPro" id="IPR010994">
    <property type="entry name" value="RuvA_2-like"/>
</dbReference>
<dbReference type="InterPro" id="IPR001943">
    <property type="entry name" value="UVR_dom"/>
</dbReference>
<dbReference type="InterPro" id="IPR036876">
    <property type="entry name" value="UVR_dom_sf"/>
</dbReference>
<dbReference type="InterPro" id="IPR050066">
    <property type="entry name" value="UvrABC_protein_C"/>
</dbReference>
<dbReference type="InterPro" id="IPR004791">
    <property type="entry name" value="UvrC"/>
</dbReference>
<dbReference type="InterPro" id="IPR001162">
    <property type="entry name" value="UvrC_RNase_H_dom"/>
</dbReference>
<dbReference type="InterPro" id="IPR038476">
    <property type="entry name" value="UvrC_RNase_H_dom_sf"/>
</dbReference>
<dbReference type="NCBIfam" id="TIGR00194">
    <property type="entry name" value="uvrC"/>
    <property type="match status" value="1"/>
</dbReference>
<dbReference type="PANTHER" id="PTHR30562:SF1">
    <property type="entry name" value="UVRABC SYSTEM PROTEIN C"/>
    <property type="match status" value="1"/>
</dbReference>
<dbReference type="PANTHER" id="PTHR30562">
    <property type="entry name" value="UVRC/OXIDOREDUCTASE"/>
    <property type="match status" value="1"/>
</dbReference>
<dbReference type="Pfam" id="PF01541">
    <property type="entry name" value="GIY-YIG"/>
    <property type="match status" value="1"/>
</dbReference>
<dbReference type="Pfam" id="PF02151">
    <property type="entry name" value="UVR"/>
    <property type="match status" value="1"/>
</dbReference>
<dbReference type="Pfam" id="PF22920">
    <property type="entry name" value="UvrC_RNaseH"/>
    <property type="match status" value="1"/>
</dbReference>
<dbReference type="Pfam" id="PF08459">
    <property type="entry name" value="UvrC_RNaseH_dom"/>
    <property type="match status" value="1"/>
</dbReference>
<dbReference type="SMART" id="SM00465">
    <property type="entry name" value="GIYc"/>
    <property type="match status" value="1"/>
</dbReference>
<dbReference type="SUPFAM" id="SSF46600">
    <property type="entry name" value="C-terminal UvrC-binding domain of UvrB"/>
    <property type="match status" value="1"/>
</dbReference>
<dbReference type="SUPFAM" id="SSF82771">
    <property type="entry name" value="GIY-YIG endonuclease"/>
    <property type="match status" value="1"/>
</dbReference>
<dbReference type="SUPFAM" id="SSF47781">
    <property type="entry name" value="RuvA domain 2-like"/>
    <property type="match status" value="1"/>
</dbReference>
<dbReference type="PROSITE" id="PS50164">
    <property type="entry name" value="GIY_YIG"/>
    <property type="match status" value="1"/>
</dbReference>
<dbReference type="PROSITE" id="PS50151">
    <property type="entry name" value="UVR"/>
    <property type="match status" value="1"/>
</dbReference>
<dbReference type="PROSITE" id="PS50165">
    <property type="entry name" value="UVRC"/>
    <property type="match status" value="1"/>
</dbReference>
<organism>
    <name type="scientific">Helicobacter pylori (strain HPAG1)</name>
    <dbReference type="NCBI Taxonomy" id="357544"/>
    <lineage>
        <taxon>Bacteria</taxon>
        <taxon>Pseudomonadati</taxon>
        <taxon>Campylobacterota</taxon>
        <taxon>Epsilonproteobacteria</taxon>
        <taxon>Campylobacterales</taxon>
        <taxon>Helicobacteraceae</taxon>
        <taxon>Helicobacter</taxon>
    </lineage>
</organism>
<protein>
    <recommendedName>
        <fullName evidence="1">UvrABC system protein C</fullName>
        <shortName evidence="1">Protein UvrC</shortName>
    </recommendedName>
    <alternativeName>
        <fullName evidence="1">Excinuclease ABC subunit C</fullName>
    </alternativeName>
</protein>
<gene>
    <name evidence="1" type="primary">uvrC</name>
    <name type="ordered locus">HPAG1_0807</name>
</gene>
<name>UVRC_HELPH</name>